<keyword id="KW-0274">FAD</keyword>
<keyword id="KW-0285">Flavoprotein</keyword>
<keyword id="KW-0521">NADP</keyword>
<keyword id="KW-0560">Oxidoreductase</keyword>
<evidence type="ECO:0000255" key="1">
    <source>
        <dbReference type="HAMAP-Rule" id="MF_01685"/>
    </source>
</evidence>
<comment type="catalytic activity">
    <reaction evidence="1">
        <text>2 reduced [2Fe-2S]-[ferredoxin] + NADP(+) + H(+) = 2 oxidized [2Fe-2S]-[ferredoxin] + NADPH</text>
        <dbReference type="Rhea" id="RHEA:20125"/>
        <dbReference type="Rhea" id="RHEA-COMP:10000"/>
        <dbReference type="Rhea" id="RHEA-COMP:10001"/>
        <dbReference type="ChEBI" id="CHEBI:15378"/>
        <dbReference type="ChEBI" id="CHEBI:33737"/>
        <dbReference type="ChEBI" id="CHEBI:33738"/>
        <dbReference type="ChEBI" id="CHEBI:57783"/>
        <dbReference type="ChEBI" id="CHEBI:58349"/>
        <dbReference type="EC" id="1.18.1.2"/>
    </reaction>
</comment>
<comment type="cofactor">
    <cofactor evidence="1">
        <name>FAD</name>
        <dbReference type="ChEBI" id="CHEBI:57692"/>
    </cofactor>
    <text evidence="1">Binds 1 FAD per subunit.</text>
</comment>
<comment type="subunit">
    <text evidence="1">Homodimer.</text>
</comment>
<comment type="similarity">
    <text evidence="1">Belongs to the ferredoxin--NADP reductase type 2 family.</text>
</comment>
<protein>
    <recommendedName>
        <fullName evidence="1">Ferredoxin--NADP reductase 1</fullName>
        <shortName evidence="1">FNR 1</shortName>
        <shortName evidence="1">Fd-NADP(+) reductase 1</shortName>
        <ecNumber evidence="1">1.18.1.2</ecNumber>
    </recommendedName>
</protein>
<sequence>MNREELFDVTVIGGGPAGLYSAFYSGLREMKTKIIEFQPQLGGKIHVYPEKMIWDVGGLLPVTGDKLIEQLVQQGLTFQPEVVLNTKVESIIRNKDGTFTLKANDGKEHFSKTVIVATGSGILKPQKLSIEGAERFEVSNLNYTVKSLKRFKDKTIIISGGGNSAVDWANELEPIAKKVYVTYRKEELSGHEAQVKQLLNSSAECFFHTSITKLIAGDSHEAIEYVELTNHETGEVSHLLIDEVIINHGYERDITLLENSELDVAIIDNFYIAGNANSESSVDGLYAAGDILKHEGKLHLIAGAFQDAGNAVNKAKQFIQPDASEYGMVSSHNEVFKKRNRELIKQMMK</sequence>
<organism>
    <name type="scientific">Bacillus cereus (strain ATCC 10987 / NRS 248)</name>
    <dbReference type="NCBI Taxonomy" id="222523"/>
    <lineage>
        <taxon>Bacteria</taxon>
        <taxon>Bacillati</taxon>
        <taxon>Bacillota</taxon>
        <taxon>Bacilli</taxon>
        <taxon>Bacillales</taxon>
        <taxon>Bacillaceae</taxon>
        <taxon>Bacillus</taxon>
        <taxon>Bacillus cereus group</taxon>
    </lineage>
</organism>
<feature type="chain" id="PRO_0000364788" description="Ferredoxin--NADP reductase 1">
    <location>
        <begin position="1"/>
        <end position="349"/>
    </location>
</feature>
<feature type="binding site" evidence="1">
    <location>
        <position position="36"/>
    </location>
    <ligand>
        <name>FAD</name>
        <dbReference type="ChEBI" id="CHEBI:57692"/>
    </ligand>
</feature>
<feature type="binding site" evidence="1">
    <location>
        <position position="44"/>
    </location>
    <ligand>
        <name>FAD</name>
        <dbReference type="ChEBI" id="CHEBI:57692"/>
    </ligand>
</feature>
<feature type="binding site" evidence="1">
    <location>
        <position position="48"/>
    </location>
    <ligand>
        <name>FAD</name>
        <dbReference type="ChEBI" id="CHEBI:57692"/>
    </ligand>
</feature>
<feature type="binding site" evidence="1">
    <location>
        <position position="88"/>
    </location>
    <ligand>
        <name>FAD</name>
        <dbReference type="ChEBI" id="CHEBI:57692"/>
    </ligand>
</feature>
<feature type="binding site" evidence="1">
    <location>
        <position position="123"/>
    </location>
    <ligand>
        <name>FAD</name>
        <dbReference type="ChEBI" id="CHEBI:57692"/>
    </ligand>
</feature>
<feature type="binding site" evidence="1">
    <location>
        <position position="290"/>
    </location>
    <ligand>
        <name>FAD</name>
        <dbReference type="ChEBI" id="CHEBI:57692"/>
    </ligand>
</feature>
<feature type="binding site" evidence="1">
    <location>
        <position position="331"/>
    </location>
    <ligand>
        <name>FAD</name>
        <dbReference type="ChEBI" id="CHEBI:57692"/>
    </ligand>
</feature>
<name>FENR1_BACC1</name>
<reference key="1">
    <citation type="journal article" date="2004" name="Nucleic Acids Res.">
        <title>The genome sequence of Bacillus cereus ATCC 10987 reveals metabolic adaptations and a large plasmid related to Bacillus anthracis pXO1.</title>
        <authorList>
            <person name="Rasko D.A."/>
            <person name="Ravel J."/>
            <person name="Oekstad O.A."/>
            <person name="Helgason E."/>
            <person name="Cer R.Z."/>
            <person name="Jiang L."/>
            <person name="Shores K.A."/>
            <person name="Fouts D.E."/>
            <person name="Tourasse N.J."/>
            <person name="Angiuoli S.V."/>
            <person name="Kolonay J.F."/>
            <person name="Nelson W.C."/>
            <person name="Kolstoe A.-B."/>
            <person name="Fraser C.M."/>
            <person name="Read T.D."/>
        </authorList>
    </citation>
    <scope>NUCLEOTIDE SEQUENCE [LARGE SCALE GENOMIC DNA]</scope>
    <source>
        <strain>ATCC 10987 / NRS 248</strain>
    </source>
</reference>
<proteinExistence type="inferred from homology"/>
<gene>
    <name type="ordered locus">BCE_0452</name>
</gene>
<dbReference type="EC" id="1.18.1.2" evidence="1"/>
<dbReference type="EMBL" id="AE017194">
    <property type="protein sequence ID" value="AAS39388.1"/>
    <property type="molecule type" value="Genomic_DNA"/>
</dbReference>
<dbReference type="SMR" id="Q73EA6"/>
<dbReference type="KEGG" id="bca:BCE_0452"/>
<dbReference type="HOGENOM" id="CLU_031864_5_5_9"/>
<dbReference type="Proteomes" id="UP000002527">
    <property type="component" value="Chromosome"/>
</dbReference>
<dbReference type="GO" id="GO:0004324">
    <property type="term" value="F:ferredoxin-NADP+ reductase activity"/>
    <property type="evidence" value="ECO:0007669"/>
    <property type="project" value="UniProtKB-UniRule"/>
</dbReference>
<dbReference type="GO" id="GO:0050660">
    <property type="term" value="F:flavin adenine dinucleotide binding"/>
    <property type="evidence" value="ECO:0007669"/>
    <property type="project" value="UniProtKB-UniRule"/>
</dbReference>
<dbReference type="GO" id="GO:0050661">
    <property type="term" value="F:NADP binding"/>
    <property type="evidence" value="ECO:0007669"/>
    <property type="project" value="UniProtKB-UniRule"/>
</dbReference>
<dbReference type="Gene3D" id="3.50.50.60">
    <property type="entry name" value="FAD/NAD(P)-binding domain"/>
    <property type="match status" value="2"/>
</dbReference>
<dbReference type="HAMAP" id="MF_01685">
    <property type="entry name" value="FENR2"/>
    <property type="match status" value="1"/>
</dbReference>
<dbReference type="InterPro" id="IPR036188">
    <property type="entry name" value="FAD/NAD-bd_sf"/>
</dbReference>
<dbReference type="InterPro" id="IPR023753">
    <property type="entry name" value="FAD/NAD-binding_dom"/>
</dbReference>
<dbReference type="InterPro" id="IPR022890">
    <property type="entry name" value="Fd--NADP_Rdtase_type_2"/>
</dbReference>
<dbReference type="InterPro" id="IPR050097">
    <property type="entry name" value="Ferredoxin-NADP_redctase_2"/>
</dbReference>
<dbReference type="PANTHER" id="PTHR48105">
    <property type="entry name" value="THIOREDOXIN REDUCTASE 1-RELATED-RELATED"/>
    <property type="match status" value="1"/>
</dbReference>
<dbReference type="Pfam" id="PF07992">
    <property type="entry name" value="Pyr_redox_2"/>
    <property type="match status" value="1"/>
</dbReference>
<dbReference type="PRINTS" id="PR00368">
    <property type="entry name" value="FADPNR"/>
</dbReference>
<dbReference type="PRINTS" id="PR00469">
    <property type="entry name" value="PNDRDTASEII"/>
</dbReference>
<dbReference type="SUPFAM" id="SSF51905">
    <property type="entry name" value="FAD/NAD(P)-binding domain"/>
    <property type="match status" value="1"/>
</dbReference>
<accession>Q73EA6</accession>